<organism>
    <name type="scientific">Pseudomonas fluorescens (strain ATCC BAA-477 / NRRL B-23932 / Pf-5)</name>
    <dbReference type="NCBI Taxonomy" id="220664"/>
    <lineage>
        <taxon>Bacteria</taxon>
        <taxon>Pseudomonadati</taxon>
        <taxon>Pseudomonadota</taxon>
        <taxon>Gammaproteobacteria</taxon>
        <taxon>Pseudomonadales</taxon>
        <taxon>Pseudomonadaceae</taxon>
        <taxon>Pseudomonas</taxon>
    </lineage>
</organism>
<reference key="1">
    <citation type="journal article" date="2005" name="Nat. Biotechnol.">
        <title>Complete genome sequence of the plant commensal Pseudomonas fluorescens Pf-5.</title>
        <authorList>
            <person name="Paulsen I.T."/>
            <person name="Press C.M."/>
            <person name="Ravel J."/>
            <person name="Kobayashi D.Y."/>
            <person name="Myers G.S.A."/>
            <person name="Mavrodi D.V."/>
            <person name="DeBoy R.T."/>
            <person name="Seshadri R."/>
            <person name="Ren Q."/>
            <person name="Madupu R."/>
            <person name="Dodson R.J."/>
            <person name="Durkin A.S."/>
            <person name="Brinkac L.M."/>
            <person name="Daugherty S.C."/>
            <person name="Sullivan S.A."/>
            <person name="Rosovitz M.J."/>
            <person name="Gwinn M.L."/>
            <person name="Zhou L."/>
            <person name="Schneider D.J."/>
            <person name="Cartinhour S.W."/>
            <person name="Nelson W.C."/>
            <person name="Weidman J."/>
            <person name="Watkins K."/>
            <person name="Tran K."/>
            <person name="Khouri H."/>
            <person name="Pierson E.A."/>
            <person name="Pierson L.S. III"/>
            <person name="Thomashow L.S."/>
            <person name="Loper J.E."/>
        </authorList>
    </citation>
    <scope>NUCLEOTIDE SEQUENCE [LARGE SCALE GENOMIC DNA]</scope>
    <source>
        <strain>ATCC BAA-477 / NRRL B-23932 / Pf-5</strain>
    </source>
</reference>
<accession>Q4K555</accession>
<comment type="function">
    <text evidence="1">Located on the platform of the 30S subunit, it bridges several disparate RNA helices of the 16S rRNA. Forms part of the Shine-Dalgarno cleft in the 70S ribosome.</text>
</comment>
<comment type="subunit">
    <text evidence="1">Part of the 30S ribosomal subunit. Interacts with proteins S7 and S18. Binds to IF-3.</text>
</comment>
<comment type="similarity">
    <text evidence="1">Belongs to the universal ribosomal protein uS11 family.</text>
</comment>
<name>RS11_PSEF5</name>
<sequence length="129" mass="13630">MAKPAARPRKKIKKTVVDGIAHIHASFNNTIVTITDRQGNALSWATSGGSGFRGSRKSTPFAAQVAAERAGQAALEYGLKNLDVNVKGPGPGRESAVRALNGCGYKIASITDVTPIPHNGCRPPKKRRV</sequence>
<proteinExistence type="inferred from homology"/>
<keyword id="KW-0687">Ribonucleoprotein</keyword>
<keyword id="KW-0689">Ribosomal protein</keyword>
<keyword id="KW-0694">RNA-binding</keyword>
<keyword id="KW-0699">rRNA-binding</keyword>
<evidence type="ECO:0000255" key="1">
    <source>
        <dbReference type="HAMAP-Rule" id="MF_01310"/>
    </source>
</evidence>
<evidence type="ECO:0000305" key="2"/>
<feature type="chain" id="PRO_0000230419" description="Small ribosomal subunit protein uS11">
    <location>
        <begin position="1"/>
        <end position="129"/>
    </location>
</feature>
<gene>
    <name evidence="1" type="primary">rpsK</name>
    <name type="ordered locus">PFL_5560</name>
</gene>
<dbReference type="EMBL" id="CP000076">
    <property type="protein sequence ID" value="AAY94766.1"/>
    <property type="molecule type" value="Genomic_DNA"/>
</dbReference>
<dbReference type="RefSeq" id="WP_007924177.1">
    <property type="nucleotide sequence ID" value="NC_004129.6"/>
</dbReference>
<dbReference type="SMR" id="Q4K555"/>
<dbReference type="STRING" id="220664.PFL_5560"/>
<dbReference type="GeneID" id="96618873"/>
<dbReference type="KEGG" id="pfl:PFL_5560"/>
<dbReference type="eggNOG" id="COG0100">
    <property type="taxonomic scope" value="Bacteria"/>
</dbReference>
<dbReference type="HOGENOM" id="CLU_072439_5_0_6"/>
<dbReference type="Proteomes" id="UP000008540">
    <property type="component" value="Chromosome"/>
</dbReference>
<dbReference type="GO" id="GO:1990904">
    <property type="term" value="C:ribonucleoprotein complex"/>
    <property type="evidence" value="ECO:0007669"/>
    <property type="project" value="UniProtKB-KW"/>
</dbReference>
<dbReference type="GO" id="GO:0005840">
    <property type="term" value="C:ribosome"/>
    <property type="evidence" value="ECO:0007669"/>
    <property type="project" value="UniProtKB-KW"/>
</dbReference>
<dbReference type="GO" id="GO:0019843">
    <property type="term" value="F:rRNA binding"/>
    <property type="evidence" value="ECO:0007669"/>
    <property type="project" value="UniProtKB-UniRule"/>
</dbReference>
<dbReference type="GO" id="GO:0003735">
    <property type="term" value="F:structural constituent of ribosome"/>
    <property type="evidence" value="ECO:0007669"/>
    <property type="project" value="InterPro"/>
</dbReference>
<dbReference type="GO" id="GO:0006412">
    <property type="term" value="P:translation"/>
    <property type="evidence" value="ECO:0007669"/>
    <property type="project" value="UniProtKB-UniRule"/>
</dbReference>
<dbReference type="FunFam" id="3.30.420.80:FF:000001">
    <property type="entry name" value="30S ribosomal protein S11"/>
    <property type="match status" value="1"/>
</dbReference>
<dbReference type="Gene3D" id="3.30.420.80">
    <property type="entry name" value="Ribosomal protein S11"/>
    <property type="match status" value="1"/>
</dbReference>
<dbReference type="HAMAP" id="MF_01310">
    <property type="entry name" value="Ribosomal_uS11"/>
    <property type="match status" value="1"/>
</dbReference>
<dbReference type="InterPro" id="IPR001971">
    <property type="entry name" value="Ribosomal_uS11"/>
</dbReference>
<dbReference type="InterPro" id="IPR019981">
    <property type="entry name" value="Ribosomal_uS11_bac-type"/>
</dbReference>
<dbReference type="InterPro" id="IPR018102">
    <property type="entry name" value="Ribosomal_uS11_CS"/>
</dbReference>
<dbReference type="InterPro" id="IPR036967">
    <property type="entry name" value="Ribosomal_uS11_sf"/>
</dbReference>
<dbReference type="NCBIfam" id="NF003698">
    <property type="entry name" value="PRK05309.1"/>
    <property type="match status" value="1"/>
</dbReference>
<dbReference type="NCBIfam" id="TIGR03632">
    <property type="entry name" value="uS11_bact"/>
    <property type="match status" value="1"/>
</dbReference>
<dbReference type="PANTHER" id="PTHR11759">
    <property type="entry name" value="40S RIBOSOMAL PROTEIN S14/30S RIBOSOMAL PROTEIN S11"/>
    <property type="match status" value="1"/>
</dbReference>
<dbReference type="Pfam" id="PF00411">
    <property type="entry name" value="Ribosomal_S11"/>
    <property type="match status" value="1"/>
</dbReference>
<dbReference type="PIRSF" id="PIRSF002131">
    <property type="entry name" value="Ribosomal_S11"/>
    <property type="match status" value="1"/>
</dbReference>
<dbReference type="SUPFAM" id="SSF53137">
    <property type="entry name" value="Translational machinery components"/>
    <property type="match status" value="1"/>
</dbReference>
<dbReference type="PROSITE" id="PS00054">
    <property type="entry name" value="RIBOSOMAL_S11"/>
    <property type="match status" value="1"/>
</dbReference>
<protein>
    <recommendedName>
        <fullName evidence="1">Small ribosomal subunit protein uS11</fullName>
    </recommendedName>
    <alternativeName>
        <fullName evidence="2">30S ribosomal protein S11</fullName>
    </alternativeName>
</protein>